<name>LSPA_BORGP</name>
<protein>
    <recommendedName>
        <fullName evidence="1">Lipoprotein signal peptidase</fullName>
        <ecNumber evidence="1">3.4.23.36</ecNumber>
    </recommendedName>
    <alternativeName>
        <fullName evidence="1">Prolipoprotein signal peptidase</fullName>
    </alternativeName>
    <alternativeName>
        <fullName evidence="1">Signal peptidase II</fullName>
        <shortName evidence="1">SPase II</shortName>
    </alternativeName>
</protein>
<organism>
    <name type="scientific">Borrelia garinii subsp. bavariensis (strain ATCC BAA-2496 / DSM 23469 / PBi)</name>
    <name type="common">Borreliella bavariensis</name>
    <dbReference type="NCBI Taxonomy" id="290434"/>
    <lineage>
        <taxon>Bacteria</taxon>
        <taxon>Pseudomonadati</taxon>
        <taxon>Spirochaetota</taxon>
        <taxon>Spirochaetia</taxon>
        <taxon>Spirochaetales</taxon>
        <taxon>Borreliaceae</taxon>
        <taxon>Borreliella</taxon>
    </lineage>
</organism>
<keyword id="KW-0064">Aspartyl protease</keyword>
<keyword id="KW-0997">Cell inner membrane</keyword>
<keyword id="KW-1003">Cell membrane</keyword>
<keyword id="KW-0378">Hydrolase</keyword>
<keyword id="KW-0472">Membrane</keyword>
<keyword id="KW-0645">Protease</keyword>
<keyword id="KW-0812">Transmembrane</keyword>
<keyword id="KW-1133">Transmembrane helix</keyword>
<feature type="chain" id="PRO_0000289356" description="Lipoprotein signal peptidase">
    <location>
        <begin position="1"/>
        <end position="170"/>
    </location>
</feature>
<feature type="transmembrane region" description="Helical" evidence="1">
    <location>
        <begin position="9"/>
        <end position="29"/>
    </location>
</feature>
<feature type="transmembrane region" description="Helical" evidence="1">
    <location>
        <begin position="72"/>
        <end position="92"/>
    </location>
</feature>
<feature type="transmembrane region" description="Helical" evidence="1">
    <location>
        <begin position="95"/>
        <end position="117"/>
    </location>
</feature>
<feature type="transmembrane region" description="Helical" evidence="1">
    <location>
        <begin position="143"/>
        <end position="163"/>
    </location>
</feature>
<feature type="active site" evidence="1">
    <location>
        <position position="124"/>
    </location>
</feature>
<feature type="active site" evidence="1">
    <location>
        <position position="146"/>
    </location>
</feature>
<dbReference type="EC" id="3.4.23.36" evidence="1"/>
<dbReference type="EMBL" id="CP000013">
    <property type="protein sequence ID" value="AAU07321.1"/>
    <property type="molecule type" value="Genomic_DNA"/>
</dbReference>
<dbReference type="RefSeq" id="WP_011193791.1">
    <property type="nucleotide sequence ID" value="NZ_CP028872.1"/>
</dbReference>
<dbReference type="SMR" id="Q661F0"/>
<dbReference type="GeneID" id="45161265"/>
<dbReference type="KEGG" id="bga:BG0482"/>
<dbReference type="eggNOG" id="COG0597">
    <property type="taxonomic scope" value="Bacteria"/>
</dbReference>
<dbReference type="HOGENOM" id="CLU_083252_3_1_12"/>
<dbReference type="OrthoDB" id="9810259at2"/>
<dbReference type="UniPathway" id="UPA00665"/>
<dbReference type="Proteomes" id="UP000002276">
    <property type="component" value="Chromosome"/>
</dbReference>
<dbReference type="GO" id="GO:0005886">
    <property type="term" value="C:plasma membrane"/>
    <property type="evidence" value="ECO:0007669"/>
    <property type="project" value="UniProtKB-SubCell"/>
</dbReference>
<dbReference type="GO" id="GO:0004190">
    <property type="term" value="F:aspartic-type endopeptidase activity"/>
    <property type="evidence" value="ECO:0007669"/>
    <property type="project" value="UniProtKB-UniRule"/>
</dbReference>
<dbReference type="GO" id="GO:0006508">
    <property type="term" value="P:proteolysis"/>
    <property type="evidence" value="ECO:0007669"/>
    <property type="project" value="UniProtKB-KW"/>
</dbReference>
<dbReference type="HAMAP" id="MF_00161">
    <property type="entry name" value="LspA"/>
    <property type="match status" value="1"/>
</dbReference>
<dbReference type="InterPro" id="IPR001872">
    <property type="entry name" value="Peptidase_A8"/>
</dbReference>
<dbReference type="NCBIfam" id="TIGR00077">
    <property type="entry name" value="lspA"/>
    <property type="match status" value="1"/>
</dbReference>
<dbReference type="PANTHER" id="PTHR33695">
    <property type="entry name" value="LIPOPROTEIN SIGNAL PEPTIDASE"/>
    <property type="match status" value="1"/>
</dbReference>
<dbReference type="PANTHER" id="PTHR33695:SF1">
    <property type="entry name" value="LIPOPROTEIN SIGNAL PEPTIDASE"/>
    <property type="match status" value="1"/>
</dbReference>
<dbReference type="Pfam" id="PF01252">
    <property type="entry name" value="Peptidase_A8"/>
    <property type="match status" value="1"/>
</dbReference>
<dbReference type="PRINTS" id="PR00781">
    <property type="entry name" value="LIPOSIGPTASE"/>
</dbReference>
<dbReference type="PROSITE" id="PS00855">
    <property type="entry name" value="SPASE_II"/>
    <property type="match status" value="1"/>
</dbReference>
<accession>Q661F0</accession>
<evidence type="ECO:0000255" key="1">
    <source>
        <dbReference type="HAMAP-Rule" id="MF_00161"/>
    </source>
</evidence>
<sequence>MGAKSKQYFNIFVFVISLIFFDQLSKYLVVKYVKLGSIYFSFFDNFFRIIHVRNTGILFSMGSDIHYSLKKIFFIAMPIFILIFVFSLALKEKNCITRISLLLIFSGGVGNIIDRLFRPSGVVDFLDFKFYGIFGLDRWPTFNFADSYVVIGMILFLVYDFFIKRKVLNT</sequence>
<proteinExistence type="inferred from homology"/>
<gene>
    <name evidence="1" type="primary">lspA</name>
    <name type="ordered locus">BG0482</name>
</gene>
<comment type="function">
    <text evidence="1">This protein specifically catalyzes the removal of signal peptides from prolipoproteins.</text>
</comment>
<comment type="catalytic activity">
    <reaction evidence="1">
        <text>Release of signal peptides from bacterial membrane prolipoproteins. Hydrolyzes -Xaa-Yaa-Zaa-|-(S,diacylglyceryl)Cys-, in which Xaa is hydrophobic (preferably Leu), and Yaa (Ala or Ser) and Zaa (Gly or Ala) have small, neutral side chains.</text>
        <dbReference type="EC" id="3.4.23.36"/>
    </reaction>
</comment>
<comment type="pathway">
    <text evidence="1">Protein modification; lipoprotein biosynthesis (signal peptide cleavage).</text>
</comment>
<comment type="subcellular location">
    <subcellularLocation>
        <location evidence="1">Cell inner membrane</location>
        <topology evidence="1">Multi-pass membrane protein</topology>
    </subcellularLocation>
</comment>
<comment type="similarity">
    <text evidence="1">Belongs to the peptidase A8 family.</text>
</comment>
<reference key="1">
    <citation type="journal article" date="2004" name="Nucleic Acids Res.">
        <title>Comparative analysis of the Borrelia garinii genome.</title>
        <authorList>
            <person name="Gloeckner G."/>
            <person name="Lehmann R."/>
            <person name="Romualdi A."/>
            <person name="Pradella S."/>
            <person name="Schulte-Spechtel U."/>
            <person name="Schilhabel M."/>
            <person name="Wilske B."/>
            <person name="Suehnel J."/>
            <person name="Platzer M."/>
        </authorList>
    </citation>
    <scope>NUCLEOTIDE SEQUENCE [LARGE SCALE GENOMIC DNA]</scope>
    <source>
        <strain>ATCC BAA-2496 / DSM 23469 / PBi</strain>
    </source>
</reference>